<reference key="1">
    <citation type="journal article" date="2008" name="Proc. Natl. Acad. Sci. U.S.A.">
        <title>Niche adaptation and genome expansion in the chlorophyll d-producing cyanobacterium Acaryochloris marina.</title>
        <authorList>
            <person name="Swingley W.D."/>
            <person name="Chen M."/>
            <person name="Cheung P.C."/>
            <person name="Conrad A.L."/>
            <person name="Dejesa L.C."/>
            <person name="Hao J."/>
            <person name="Honchak B.M."/>
            <person name="Karbach L.E."/>
            <person name="Kurdoglu A."/>
            <person name="Lahiri S."/>
            <person name="Mastrian S.D."/>
            <person name="Miyashita H."/>
            <person name="Page L."/>
            <person name="Ramakrishna P."/>
            <person name="Satoh S."/>
            <person name="Sattley W.M."/>
            <person name="Shimada Y."/>
            <person name="Taylor H.L."/>
            <person name="Tomo T."/>
            <person name="Tsuchiya T."/>
            <person name="Wang Z.T."/>
            <person name="Raymond J."/>
            <person name="Mimuro M."/>
            <person name="Blankenship R.E."/>
            <person name="Touchman J.W."/>
        </authorList>
    </citation>
    <scope>NUCLEOTIDE SEQUENCE [LARGE SCALE GENOMIC DNA]</scope>
    <source>
        <strain>MBIC 11017</strain>
    </source>
</reference>
<protein>
    <recommendedName>
        <fullName evidence="1">Acetate kinase</fullName>
        <ecNumber evidence="1">2.7.2.1</ecNumber>
    </recommendedName>
    <alternativeName>
        <fullName evidence="1">Acetokinase</fullName>
    </alternativeName>
</protein>
<organism>
    <name type="scientific">Acaryochloris marina (strain MBIC 11017)</name>
    <dbReference type="NCBI Taxonomy" id="329726"/>
    <lineage>
        <taxon>Bacteria</taxon>
        <taxon>Bacillati</taxon>
        <taxon>Cyanobacteriota</taxon>
        <taxon>Cyanophyceae</taxon>
        <taxon>Acaryochloridales</taxon>
        <taxon>Acaryochloridaceae</taxon>
        <taxon>Acaryochloris</taxon>
    </lineage>
</organism>
<gene>
    <name evidence="1" type="primary">ackA</name>
    <name type="ordered locus">AM1_0445</name>
</gene>
<comment type="function">
    <text evidence="1">Catalyzes the formation of acetyl phosphate from acetate and ATP. Can also catalyze the reverse reaction.</text>
</comment>
<comment type="catalytic activity">
    <reaction evidence="1">
        <text>acetate + ATP = acetyl phosphate + ADP</text>
        <dbReference type="Rhea" id="RHEA:11352"/>
        <dbReference type="ChEBI" id="CHEBI:22191"/>
        <dbReference type="ChEBI" id="CHEBI:30089"/>
        <dbReference type="ChEBI" id="CHEBI:30616"/>
        <dbReference type="ChEBI" id="CHEBI:456216"/>
        <dbReference type="EC" id="2.7.2.1"/>
    </reaction>
</comment>
<comment type="cofactor">
    <cofactor evidence="1">
        <name>Mg(2+)</name>
        <dbReference type="ChEBI" id="CHEBI:18420"/>
    </cofactor>
    <cofactor evidence="1">
        <name>Mn(2+)</name>
        <dbReference type="ChEBI" id="CHEBI:29035"/>
    </cofactor>
    <text evidence="1">Mg(2+). Can also accept Mn(2+).</text>
</comment>
<comment type="pathway">
    <text evidence="1">Metabolic intermediate biosynthesis; acetyl-CoA biosynthesis; acetyl-CoA from acetate: step 1/2.</text>
</comment>
<comment type="subunit">
    <text evidence="1">Homodimer.</text>
</comment>
<comment type="subcellular location">
    <subcellularLocation>
        <location evidence="1">Cytoplasm</location>
    </subcellularLocation>
</comment>
<comment type="similarity">
    <text evidence="1">Belongs to the acetokinase family.</text>
</comment>
<sequence>MKILVLNAGSSSHKCCLYAIEGPLPDHPAPPLWEAQLDWHDPNHASLKVKTKRENLEEDLSDVSRADALSHLLTTLWHGPTQVIQMAQEINVVGHRVVHGGQDYQSSVVVTSEVKTAIADLIPLAPNHNPANLEGIKLIEQLLGNVRQVAVFDTAFHSHLPEVAAIYPGPYDWQQQGIRRYGFHGISHQYCTQRTAEILGRGVDRLIICHLGNGASLTAVKQGQSIDTSMGFTPLEGLMMGTRSGSIDPGILIHLMRQGYDADQLDHMLNKASGLKGISGVSHDLREIEQAIAQDNAQAKLARDLYLHRLKACLGSMLMSLGGVDVLVFTGGIGEHSASVRAETCEALAFLGLKLDPILNRKSPVDQDIAAVDSKVRVLVIKTQEDWAIAQSCYEQCC</sequence>
<evidence type="ECO:0000255" key="1">
    <source>
        <dbReference type="HAMAP-Rule" id="MF_00020"/>
    </source>
</evidence>
<accession>B0CB11</accession>
<name>ACKA_ACAM1</name>
<proteinExistence type="inferred from homology"/>
<dbReference type="EC" id="2.7.2.1" evidence="1"/>
<dbReference type="EMBL" id="CP000828">
    <property type="protein sequence ID" value="ABW25501.1"/>
    <property type="molecule type" value="Genomic_DNA"/>
</dbReference>
<dbReference type="RefSeq" id="WP_012161108.1">
    <property type="nucleotide sequence ID" value="NC_009925.1"/>
</dbReference>
<dbReference type="SMR" id="B0CB11"/>
<dbReference type="STRING" id="329726.AM1_0445"/>
<dbReference type="KEGG" id="amr:AM1_0445"/>
<dbReference type="eggNOG" id="COG0282">
    <property type="taxonomic scope" value="Bacteria"/>
</dbReference>
<dbReference type="HOGENOM" id="CLU_020352_0_0_3"/>
<dbReference type="OrthoDB" id="9802453at2"/>
<dbReference type="UniPathway" id="UPA00340">
    <property type="reaction ID" value="UER00458"/>
</dbReference>
<dbReference type="Proteomes" id="UP000000268">
    <property type="component" value="Chromosome"/>
</dbReference>
<dbReference type="GO" id="GO:0005737">
    <property type="term" value="C:cytoplasm"/>
    <property type="evidence" value="ECO:0007669"/>
    <property type="project" value="UniProtKB-SubCell"/>
</dbReference>
<dbReference type="GO" id="GO:0008776">
    <property type="term" value="F:acetate kinase activity"/>
    <property type="evidence" value="ECO:0007669"/>
    <property type="project" value="UniProtKB-UniRule"/>
</dbReference>
<dbReference type="GO" id="GO:0005524">
    <property type="term" value="F:ATP binding"/>
    <property type="evidence" value="ECO:0007669"/>
    <property type="project" value="UniProtKB-KW"/>
</dbReference>
<dbReference type="GO" id="GO:0000287">
    <property type="term" value="F:magnesium ion binding"/>
    <property type="evidence" value="ECO:0007669"/>
    <property type="project" value="UniProtKB-UniRule"/>
</dbReference>
<dbReference type="GO" id="GO:0006083">
    <property type="term" value="P:acetate metabolic process"/>
    <property type="evidence" value="ECO:0007669"/>
    <property type="project" value="TreeGrafter"/>
</dbReference>
<dbReference type="GO" id="GO:0006085">
    <property type="term" value="P:acetyl-CoA biosynthetic process"/>
    <property type="evidence" value="ECO:0007669"/>
    <property type="project" value="UniProtKB-UniRule"/>
</dbReference>
<dbReference type="CDD" id="cd24010">
    <property type="entry name" value="ASKHA_NBD_AcK_PK"/>
    <property type="match status" value="1"/>
</dbReference>
<dbReference type="Gene3D" id="3.30.420.40">
    <property type="match status" value="2"/>
</dbReference>
<dbReference type="HAMAP" id="MF_00020">
    <property type="entry name" value="Acetate_kinase"/>
    <property type="match status" value="1"/>
</dbReference>
<dbReference type="InterPro" id="IPR004372">
    <property type="entry name" value="Ac/propionate_kinase"/>
</dbReference>
<dbReference type="InterPro" id="IPR000890">
    <property type="entry name" value="Aliphatic_acid_kin_short-chain"/>
</dbReference>
<dbReference type="InterPro" id="IPR023865">
    <property type="entry name" value="Aliphatic_acid_kinase_CS"/>
</dbReference>
<dbReference type="InterPro" id="IPR043129">
    <property type="entry name" value="ATPase_NBD"/>
</dbReference>
<dbReference type="NCBIfam" id="TIGR00016">
    <property type="entry name" value="ackA"/>
    <property type="match status" value="1"/>
</dbReference>
<dbReference type="PANTHER" id="PTHR21060">
    <property type="entry name" value="ACETATE KINASE"/>
    <property type="match status" value="1"/>
</dbReference>
<dbReference type="PANTHER" id="PTHR21060:SF15">
    <property type="entry name" value="ACETATE KINASE-RELATED"/>
    <property type="match status" value="1"/>
</dbReference>
<dbReference type="Pfam" id="PF00871">
    <property type="entry name" value="Acetate_kinase"/>
    <property type="match status" value="1"/>
</dbReference>
<dbReference type="PIRSF" id="PIRSF000722">
    <property type="entry name" value="Acetate_prop_kin"/>
    <property type="match status" value="1"/>
</dbReference>
<dbReference type="PRINTS" id="PR00471">
    <property type="entry name" value="ACETATEKNASE"/>
</dbReference>
<dbReference type="SUPFAM" id="SSF53067">
    <property type="entry name" value="Actin-like ATPase domain"/>
    <property type="match status" value="2"/>
</dbReference>
<dbReference type="PROSITE" id="PS01075">
    <property type="entry name" value="ACETATE_KINASE_1"/>
    <property type="match status" value="1"/>
</dbReference>
<dbReference type="PROSITE" id="PS01076">
    <property type="entry name" value="ACETATE_KINASE_2"/>
    <property type="match status" value="1"/>
</dbReference>
<feature type="chain" id="PRO_1000089955" description="Acetate kinase">
    <location>
        <begin position="1"/>
        <end position="398"/>
    </location>
</feature>
<feature type="active site" description="Proton donor/acceptor" evidence="1">
    <location>
        <position position="153"/>
    </location>
</feature>
<feature type="binding site" evidence="1">
    <location>
        <position position="7"/>
    </location>
    <ligand>
        <name>Mg(2+)</name>
        <dbReference type="ChEBI" id="CHEBI:18420"/>
    </ligand>
</feature>
<feature type="binding site" evidence="1">
    <location>
        <position position="14"/>
    </location>
    <ligand>
        <name>ATP</name>
        <dbReference type="ChEBI" id="CHEBI:30616"/>
    </ligand>
</feature>
<feature type="binding site" evidence="1">
    <location>
        <position position="96"/>
    </location>
    <ligand>
        <name>substrate</name>
    </ligand>
</feature>
<feature type="binding site" evidence="1">
    <location>
        <begin position="210"/>
        <end position="214"/>
    </location>
    <ligand>
        <name>ATP</name>
        <dbReference type="ChEBI" id="CHEBI:30616"/>
    </ligand>
</feature>
<feature type="binding site" evidence="1">
    <location>
        <begin position="284"/>
        <end position="286"/>
    </location>
    <ligand>
        <name>ATP</name>
        <dbReference type="ChEBI" id="CHEBI:30616"/>
    </ligand>
</feature>
<feature type="binding site" evidence="1">
    <location>
        <begin position="332"/>
        <end position="336"/>
    </location>
    <ligand>
        <name>ATP</name>
        <dbReference type="ChEBI" id="CHEBI:30616"/>
    </ligand>
</feature>
<feature type="binding site" evidence="1">
    <location>
        <position position="385"/>
    </location>
    <ligand>
        <name>Mg(2+)</name>
        <dbReference type="ChEBI" id="CHEBI:18420"/>
    </ligand>
</feature>
<feature type="site" description="Transition state stabilizer" evidence="1">
    <location>
        <position position="184"/>
    </location>
</feature>
<feature type="site" description="Transition state stabilizer" evidence="1">
    <location>
        <position position="243"/>
    </location>
</feature>
<keyword id="KW-0067">ATP-binding</keyword>
<keyword id="KW-0963">Cytoplasm</keyword>
<keyword id="KW-0418">Kinase</keyword>
<keyword id="KW-0460">Magnesium</keyword>
<keyword id="KW-0479">Metal-binding</keyword>
<keyword id="KW-0547">Nucleotide-binding</keyword>
<keyword id="KW-1185">Reference proteome</keyword>
<keyword id="KW-0808">Transferase</keyword>